<sequence>MEGSDGSPRMSTEQENTEMHLIECMLKHFKTQKVAISNAIRSTFPFLESLRDHEFITGKMYEDLLDSCRSLVPVDKVIYRALEELEKKFDMTVLCELFNEVNMEKYPDLNLIRRSFGCVFPNELCFQGIDGGNPNSQLSLEQGPGASYSQGSPNGSSLDLSASEGWRSNDRRNSNLMQANQTENHQLAESPGHLDSCELQVQLNNRDATPESCSLLPQNEERAVQLNYELQINPCFVQLVDVKKENSSFSLAGNQQTRARTNQNEDSEIIELSSGDSDNGENFSEATTTVPSQPAPAYSRKPPTLRRDRGGDTSDTESSIIIRRRKRTGRKKRERLGSYLIRNIKIPMKPSWKTAFLARSANPSSQRRRKRGPRIPREENADFGGAELPVVCGNAQGFLDKEKFKQGIYVRSIRGKTGRLFTPMDFEIEGNCEKAKNWRQSIRCKGWTLRELIQKGVLQDPPRKKKETPRNPRQTRRQVNAL</sequence>
<feature type="chain" id="PRO_0000074098" description="Nuclear autoantigen Sp-100">
    <location>
        <begin position="1"/>
        <end position="482"/>
    </location>
</feature>
<feature type="domain" description="HSR" evidence="4">
    <location>
        <begin position="6"/>
        <end position="121"/>
    </location>
</feature>
<feature type="domain" description="SAND" evidence="3">
    <location>
        <begin position="378"/>
        <end position="459"/>
    </location>
</feature>
<feature type="region of interest" description="Disordered" evidence="5">
    <location>
        <begin position="136"/>
        <end position="170"/>
    </location>
</feature>
<feature type="region of interest" description="Disordered" evidence="5">
    <location>
        <begin position="250"/>
        <end position="334"/>
    </location>
</feature>
<feature type="region of interest" description="Disordered" evidence="5">
    <location>
        <begin position="357"/>
        <end position="381"/>
    </location>
</feature>
<feature type="region of interest" description="Disordered" evidence="5">
    <location>
        <begin position="455"/>
        <end position="482"/>
    </location>
</feature>
<feature type="short sequence motif" description="PxVxL motif">
    <location>
        <begin position="230"/>
        <end position="243"/>
    </location>
</feature>
<feature type="compositionally biased region" description="Polar residues" evidence="5">
    <location>
        <begin position="147"/>
        <end position="160"/>
    </location>
</feature>
<feature type="compositionally biased region" description="Polar residues" evidence="5">
    <location>
        <begin position="250"/>
        <end position="264"/>
    </location>
</feature>
<feature type="compositionally biased region" description="Polar residues" evidence="5">
    <location>
        <begin position="274"/>
        <end position="292"/>
    </location>
</feature>
<feature type="compositionally biased region" description="Basic residues" evidence="5">
    <location>
        <begin position="322"/>
        <end position="334"/>
    </location>
</feature>
<feature type="modified residue" description="Phosphoserine" evidence="9">
    <location>
        <position position="174"/>
    </location>
</feature>
<feature type="modified residue" description="Phosphoserine" evidence="9">
    <location>
        <position position="190"/>
    </location>
</feature>
<feature type="modified residue" description="Phosphothreonine" evidence="9">
    <location>
        <position position="209"/>
    </location>
</feature>
<feature type="modified residue" description="Phosphothreonine" evidence="9">
    <location>
        <position position="313"/>
    </location>
</feature>
<feature type="modified residue" description="Phosphoserine" evidence="9">
    <location>
        <position position="314"/>
    </location>
</feature>
<feature type="modified residue" description="Phosphothreonine" evidence="9">
    <location>
        <position position="316"/>
    </location>
</feature>
<feature type="modified residue" description="Phosphoserine" evidence="8 9">
    <location>
        <position position="318"/>
    </location>
</feature>
<feature type="modified residue" description="Phosphoserine" evidence="9">
    <location>
        <position position="319"/>
    </location>
</feature>
<feature type="cross-link" description="Glycyl lysine isopeptide (Lys-Gly) (interchain with G-Cter in SUMO)" evidence="1">
    <location>
        <position position="243"/>
    </location>
</feature>
<feature type="splice variant" id="VSP_005985" description="In isoform 2." evidence="6">
    <original>DTSDTESSIIIRRRKRTGR</original>
    <variation>G</variation>
    <location>
        <begin position="312"/>
        <end position="330"/>
    </location>
</feature>
<feature type="sequence conflict" description="In Ref. 1; AAC40174." evidence="7" ref="1">
    <original>E</original>
    <variation>D</variation>
    <location>
        <position position="83"/>
    </location>
</feature>
<feature type="sequence conflict" description="In Ref. 1; AAC40174." evidence="7" ref="1">
    <original>MT</original>
    <variation>IP</variation>
    <location>
        <begin position="91"/>
        <end position="92"/>
    </location>
</feature>
<feature type="sequence conflict" description="In Ref. 1; AAC40174." evidence="7" ref="1">
    <original>R</original>
    <variation>K</variation>
    <location>
        <position position="114"/>
    </location>
</feature>
<feature type="sequence conflict" description="In Ref. 1; AAC40174." evidence="7" ref="1">
    <original>G</original>
    <variation>E</variation>
    <location>
        <position position="117"/>
    </location>
</feature>
<feature type="sequence conflict" description="In Ref. 1; AAC53512/AAC53513." evidence="7" ref="1">
    <original>G</original>
    <variation>R</variation>
    <location>
        <position position="131"/>
    </location>
</feature>
<feature type="sequence conflict" description="In Ref. 1; AAC40172." evidence="7" ref="1">
    <original>NNR</original>
    <variation>ITE</variation>
    <location>
        <begin position="204"/>
        <end position="206"/>
    </location>
</feature>
<feature type="sequence conflict" description="In Ref. 1; AAC53512/AAC53513." evidence="7" ref="1">
    <original>S</original>
    <variation>T</variation>
    <location>
        <position position="441"/>
    </location>
</feature>
<evidence type="ECO:0000250" key="1"/>
<evidence type="ECO:0000250" key="2">
    <source>
        <dbReference type="UniProtKB" id="P23497"/>
    </source>
</evidence>
<evidence type="ECO:0000255" key="3">
    <source>
        <dbReference type="PROSITE-ProRule" id="PRU00185"/>
    </source>
</evidence>
<evidence type="ECO:0000255" key="4">
    <source>
        <dbReference type="PROSITE-ProRule" id="PRU00747"/>
    </source>
</evidence>
<evidence type="ECO:0000256" key="5">
    <source>
        <dbReference type="SAM" id="MobiDB-lite"/>
    </source>
</evidence>
<evidence type="ECO:0000303" key="6">
    <source>
    </source>
</evidence>
<evidence type="ECO:0000305" key="7"/>
<evidence type="ECO:0007744" key="8">
    <source>
    </source>
</evidence>
<evidence type="ECO:0007744" key="9">
    <source>
    </source>
</evidence>
<proteinExistence type="evidence at protein level"/>
<dbReference type="EMBL" id="U83630">
    <property type="protein sequence ID" value="AAC53512.1"/>
    <property type="molecule type" value="mRNA"/>
</dbReference>
<dbReference type="EMBL" id="U83636">
    <property type="protein sequence ID" value="AAC53513.1"/>
    <property type="molecule type" value="mRNA"/>
</dbReference>
<dbReference type="EMBL" id="AF040242">
    <property type="protein sequence ID" value="AAC40172.1"/>
    <property type="molecule type" value="Genomic_DNA"/>
</dbReference>
<dbReference type="EMBL" id="AF040241">
    <property type="protein sequence ID" value="AAC40172.1"/>
    <property type="status" value="JOINED"/>
    <property type="molecule type" value="Genomic_DNA"/>
</dbReference>
<dbReference type="EMBL" id="AF038850">
    <property type="protein sequence ID" value="AAC40174.1"/>
    <property type="molecule type" value="Genomic_DNA"/>
</dbReference>
<dbReference type="EMBL" id="AC147806">
    <property type="status" value="NOT_ANNOTATED_CDS"/>
    <property type="molecule type" value="Genomic_DNA"/>
</dbReference>
<dbReference type="EMBL" id="AC161342">
    <property type="status" value="NOT_ANNOTATED_CDS"/>
    <property type="molecule type" value="Genomic_DNA"/>
</dbReference>
<dbReference type="CCDS" id="CCDS83568.1">
    <molecule id="O35892-1"/>
</dbReference>
<dbReference type="CCDS" id="CCDS83569.1">
    <molecule id="O35892-2"/>
</dbReference>
<dbReference type="RefSeq" id="NP_001300641.1">
    <molecule id="O35892-1"/>
    <property type="nucleotide sequence ID" value="NM_001313712.1"/>
</dbReference>
<dbReference type="RefSeq" id="NP_001300642.1">
    <molecule id="O35892-2"/>
    <property type="nucleotide sequence ID" value="NM_001313713.1"/>
</dbReference>
<dbReference type="SMR" id="O35892"/>
<dbReference type="FunCoup" id="O35892">
    <property type="interactions" value="94"/>
</dbReference>
<dbReference type="IntAct" id="O35892">
    <property type="interactions" value="1"/>
</dbReference>
<dbReference type="STRING" id="10090.ENSMUSP00000066399"/>
<dbReference type="iPTMnet" id="O35892"/>
<dbReference type="PhosphoSitePlus" id="O35892"/>
<dbReference type="SwissPalm" id="O35892"/>
<dbReference type="jPOST" id="O35892"/>
<dbReference type="PaxDb" id="10090-ENSMUSP00000066399"/>
<dbReference type="PeptideAtlas" id="O35892"/>
<dbReference type="ProteomicsDB" id="257544">
    <molecule id="O35892-1"/>
</dbReference>
<dbReference type="ProteomicsDB" id="257545">
    <molecule id="O35892-2"/>
</dbReference>
<dbReference type="Antibodypedia" id="1754">
    <property type="antibodies" value="161 antibodies from 26 providers"/>
</dbReference>
<dbReference type="DNASU" id="20684"/>
<dbReference type="Ensembl" id="ENSMUST00000147552.8">
    <molecule id="O35892-2"/>
    <property type="protein sequence ID" value="ENSMUSP00000116942.2"/>
    <property type="gene ID" value="ENSMUSG00000026222.17"/>
</dbReference>
<dbReference type="Ensembl" id="ENSMUST00000155094.8">
    <molecule id="O35892-1"/>
    <property type="protein sequence ID" value="ENSMUSP00000118481.2"/>
    <property type="gene ID" value="ENSMUSG00000026222.17"/>
</dbReference>
<dbReference type="GeneID" id="20684"/>
<dbReference type="KEGG" id="mmu:20684"/>
<dbReference type="UCSC" id="uc007buf.1">
    <molecule id="O35892-1"/>
    <property type="organism name" value="mouse"/>
</dbReference>
<dbReference type="AGR" id="MGI:109561"/>
<dbReference type="CTD" id="6672"/>
<dbReference type="MGI" id="MGI:109561">
    <property type="gene designation" value="Sp100"/>
</dbReference>
<dbReference type="VEuPathDB" id="HostDB:ENSMUSG00000026222"/>
<dbReference type="eggNOG" id="KOG2177">
    <property type="taxonomic scope" value="Eukaryota"/>
</dbReference>
<dbReference type="GeneTree" id="ENSGT00940000162129"/>
<dbReference type="InParanoid" id="O35892"/>
<dbReference type="Reactome" id="R-MMU-3108214">
    <property type="pathway name" value="SUMOylation of DNA damage response and repair proteins"/>
</dbReference>
<dbReference type="BioGRID-ORCS" id="20684">
    <property type="hits" value="1 hit in 51 CRISPR screens"/>
</dbReference>
<dbReference type="ChiTaRS" id="Sp100">
    <property type="organism name" value="mouse"/>
</dbReference>
<dbReference type="PRO" id="PR:O35892"/>
<dbReference type="Proteomes" id="UP000000589">
    <property type="component" value="Chromosome 1"/>
</dbReference>
<dbReference type="RNAct" id="O35892">
    <property type="molecule type" value="protein"/>
</dbReference>
<dbReference type="Bgee" id="ENSMUSG00000026222">
    <property type="expression patterns" value="Expressed in granulocyte and 129 other cell types or tissues"/>
</dbReference>
<dbReference type="ExpressionAtlas" id="O35892">
    <property type="expression patterns" value="baseline and differential"/>
</dbReference>
<dbReference type="GO" id="GO:0005737">
    <property type="term" value="C:cytoplasm"/>
    <property type="evidence" value="ECO:0000250"/>
    <property type="project" value="UniProtKB"/>
</dbReference>
<dbReference type="GO" id="GO:0005634">
    <property type="term" value="C:nucleus"/>
    <property type="evidence" value="ECO:0000266"/>
    <property type="project" value="MGI"/>
</dbReference>
<dbReference type="GO" id="GO:0016605">
    <property type="term" value="C:PML body"/>
    <property type="evidence" value="ECO:0000266"/>
    <property type="project" value="MGI"/>
</dbReference>
<dbReference type="GO" id="GO:0003677">
    <property type="term" value="F:DNA binding"/>
    <property type="evidence" value="ECO:0007669"/>
    <property type="project" value="UniProtKB-KW"/>
</dbReference>
<dbReference type="GO" id="GO:0010596">
    <property type="term" value="P:negative regulation of endothelial cell migration"/>
    <property type="evidence" value="ECO:0000250"/>
    <property type="project" value="UniProtKB"/>
</dbReference>
<dbReference type="GO" id="GO:0046826">
    <property type="term" value="P:negative regulation of protein export from nucleus"/>
    <property type="evidence" value="ECO:0000250"/>
    <property type="project" value="UniProtKB"/>
</dbReference>
<dbReference type="GO" id="GO:0045765">
    <property type="term" value="P:regulation of angiogenesis"/>
    <property type="evidence" value="ECO:0000250"/>
    <property type="project" value="UniProtKB"/>
</dbReference>
<dbReference type="GO" id="GO:1902041">
    <property type="term" value="P:regulation of extrinsic apoptotic signaling pathway via death domain receptors"/>
    <property type="evidence" value="ECO:0000250"/>
    <property type="project" value="UniProtKB"/>
</dbReference>
<dbReference type="GO" id="GO:1902044">
    <property type="term" value="P:regulation of Fas signaling pathway"/>
    <property type="evidence" value="ECO:0000250"/>
    <property type="project" value="UniProtKB"/>
</dbReference>
<dbReference type="GO" id="GO:0000723">
    <property type="term" value="P:telomere maintenance"/>
    <property type="evidence" value="ECO:0000250"/>
    <property type="project" value="UniProtKB"/>
</dbReference>
<dbReference type="Gene3D" id="3.10.390.10">
    <property type="entry name" value="SAND domain-like"/>
    <property type="match status" value="1"/>
</dbReference>
<dbReference type="InterPro" id="IPR004865">
    <property type="entry name" value="HSR_dom"/>
</dbReference>
<dbReference type="InterPro" id="IPR010919">
    <property type="entry name" value="SAND-like_dom_sf"/>
</dbReference>
<dbReference type="InterPro" id="IPR000770">
    <property type="entry name" value="SAND_dom"/>
</dbReference>
<dbReference type="InterPro" id="IPR043563">
    <property type="entry name" value="Sp110/Sp140/Sp140L-like"/>
</dbReference>
<dbReference type="PANTHER" id="PTHR46386">
    <property type="entry name" value="NUCLEAR BODY PROTEIN SP140"/>
    <property type="match status" value="1"/>
</dbReference>
<dbReference type="PANTHER" id="PTHR46386:SF1">
    <property type="entry name" value="NUCLEAR BODY PROTEIN SP140-LIKE PROTEIN"/>
    <property type="match status" value="1"/>
</dbReference>
<dbReference type="Pfam" id="PF03172">
    <property type="entry name" value="HSR"/>
    <property type="match status" value="1"/>
</dbReference>
<dbReference type="Pfam" id="PF01342">
    <property type="entry name" value="SAND"/>
    <property type="match status" value="1"/>
</dbReference>
<dbReference type="SMART" id="SM00258">
    <property type="entry name" value="SAND"/>
    <property type="match status" value="1"/>
</dbReference>
<dbReference type="SUPFAM" id="SSF63763">
    <property type="entry name" value="SAND domain-like"/>
    <property type="match status" value="1"/>
</dbReference>
<dbReference type="PROSITE" id="PS51414">
    <property type="entry name" value="HSR"/>
    <property type="match status" value="1"/>
</dbReference>
<dbReference type="PROSITE" id="PS50864">
    <property type="entry name" value="SAND"/>
    <property type="match status" value="1"/>
</dbReference>
<protein>
    <recommendedName>
        <fullName>Nuclear autoantigen Sp-100</fullName>
    </recommendedName>
    <alternativeName>
        <fullName>Nuclear dot-associated Sp100 protein</fullName>
    </alternativeName>
    <alternativeName>
        <fullName>Speckled 100 kDa</fullName>
    </alternativeName>
</protein>
<organism>
    <name type="scientific">Mus musculus</name>
    <name type="common">Mouse</name>
    <dbReference type="NCBI Taxonomy" id="10090"/>
    <lineage>
        <taxon>Eukaryota</taxon>
        <taxon>Metazoa</taxon>
        <taxon>Chordata</taxon>
        <taxon>Craniata</taxon>
        <taxon>Vertebrata</taxon>
        <taxon>Euteleostomi</taxon>
        <taxon>Mammalia</taxon>
        <taxon>Eutheria</taxon>
        <taxon>Euarchontoglires</taxon>
        <taxon>Glires</taxon>
        <taxon>Rodentia</taxon>
        <taxon>Myomorpha</taxon>
        <taxon>Muroidea</taxon>
        <taxon>Muridae</taxon>
        <taxon>Murinae</taxon>
        <taxon>Mus</taxon>
        <taxon>Mus</taxon>
    </lineage>
</organism>
<keyword id="KW-0025">Alternative splicing</keyword>
<keyword id="KW-0963">Cytoplasm</keyword>
<keyword id="KW-0238">DNA-binding</keyword>
<keyword id="KW-1017">Isopeptide bond</keyword>
<keyword id="KW-0539">Nucleus</keyword>
<keyword id="KW-0597">Phosphoprotein</keyword>
<keyword id="KW-1185">Reference proteome</keyword>
<keyword id="KW-0804">Transcription</keyword>
<keyword id="KW-0805">Transcription regulation</keyword>
<keyword id="KW-0832">Ubl conjugation</keyword>
<reference key="1">
    <citation type="journal article" date="1997" name="Genomics">
        <title>Structure and expression of the murine Sp100 nuclear dot gene.</title>
        <authorList>
            <person name="Weichenhan D."/>
            <person name="Kunze B."/>
            <person name="Zacker S."/>
            <person name="Traut W."/>
            <person name="Winking H."/>
        </authorList>
    </citation>
    <scope>NUCLEOTIDE SEQUENCE [GENOMIC DNA / MRNA] (ISOFORMS 1 AND 2)</scope>
    <source>
        <strain>C57BL/6J</strain>
        <tissue>Liver</tissue>
    </source>
</reference>
<reference key="2">
    <citation type="journal article" date="2009" name="PLoS Biol.">
        <title>Lineage-specific biology revealed by a finished genome assembly of the mouse.</title>
        <authorList>
            <person name="Church D.M."/>
            <person name="Goodstadt L."/>
            <person name="Hillier L.W."/>
            <person name="Zody M.C."/>
            <person name="Goldstein S."/>
            <person name="She X."/>
            <person name="Bult C.J."/>
            <person name="Agarwala R."/>
            <person name="Cherry J.L."/>
            <person name="DiCuccio M."/>
            <person name="Hlavina W."/>
            <person name="Kapustin Y."/>
            <person name="Meric P."/>
            <person name="Maglott D."/>
            <person name="Birtle Z."/>
            <person name="Marques A.C."/>
            <person name="Graves T."/>
            <person name="Zhou S."/>
            <person name="Teague B."/>
            <person name="Potamousis K."/>
            <person name="Churas C."/>
            <person name="Place M."/>
            <person name="Herschleb J."/>
            <person name="Runnheim R."/>
            <person name="Forrest D."/>
            <person name="Amos-Landgraf J."/>
            <person name="Schwartz D.C."/>
            <person name="Cheng Z."/>
            <person name="Lindblad-Toh K."/>
            <person name="Eichler E.E."/>
            <person name="Ponting C.P."/>
        </authorList>
    </citation>
    <scope>NUCLEOTIDE SEQUENCE [LARGE SCALE GENOMIC DNA]</scope>
    <source>
        <strain>C57BL/6J</strain>
    </source>
</reference>
<reference key="3">
    <citation type="journal article" date="1998" name="Cytogenet. Cell Genet.">
        <title>Evolution by fusion and amplification: the murine Sp100-rs gene cluster.</title>
        <authorList>
            <person name="Weichenhan D."/>
            <person name="Kunze B."/>
            <person name="Traut W."/>
            <person name="Winking H."/>
        </authorList>
    </citation>
    <scope>GENOMIC ORGANIZATION</scope>
</reference>
<reference key="4">
    <citation type="journal article" date="2007" name="Proc. Natl. Acad. Sci. U.S.A.">
        <title>Large-scale phosphorylation analysis of mouse liver.</title>
        <authorList>
            <person name="Villen J."/>
            <person name="Beausoleil S.A."/>
            <person name="Gerber S.A."/>
            <person name="Gygi S.P."/>
        </authorList>
    </citation>
    <scope>PHOSPHORYLATION [LARGE SCALE ANALYSIS] AT SER-318</scope>
    <scope>IDENTIFICATION BY MASS SPECTROMETRY [LARGE SCALE ANALYSIS]</scope>
    <source>
        <tissue>Liver</tissue>
    </source>
</reference>
<reference key="5">
    <citation type="journal article" date="2010" name="Cell">
        <title>A tissue-specific atlas of mouse protein phosphorylation and expression.</title>
        <authorList>
            <person name="Huttlin E.L."/>
            <person name="Jedrychowski M.P."/>
            <person name="Elias J.E."/>
            <person name="Goswami T."/>
            <person name="Rad R."/>
            <person name="Beausoleil S.A."/>
            <person name="Villen J."/>
            <person name="Haas W."/>
            <person name="Sowa M.E."/>
            <person name="Gygi S.P."/>
        </authorList>
    </citation>
    <scope>PHOSPHORYLATION [LARGE SCALE ANALYSIS] AT SER-174; SER-190; THR-209; THR-313; SER-314; THR-316; SER-318 AND SER-319</scope>
    <scope>IDENTIFICATION BY MASS SPECTROMETRY [LARGE SCALE ANALYSIS]</scope>
    <source>
        <tissue>Brown adipose tissue</tissue>
        <tissue>Heart</tissue>
        <tissue>Kidney</tissue>
        <tissue>Liver</tissue>
        <tissue>Lung</tissue>
        <tissue>Pancreas</tissue>
        <tissue>Spleen</tissue>
    </source>
</reference>
<name>SP100_MOUSE</name>
<comment type="function">
    <text evidence="2">Together with PML, this tumor suppressor is a major constituent of the PML bodies, a subnuclear organelle involved in a large number of physiological processes including cell growth, differentiation and apoptosis. Functions as a transcriptional coactivator of ETS1 and ETS2. Under certain conditions, it may also act as a corepressor of ETS1 preventing its binding to DNA. Through the regulation of ETS1 it may play a role in angiogenesis, controlling endothelial cell motility and invasion. Through interaction with the MRN complex it may be involved in the regulation of telomeres lengthening. May also regulate TP53-mediated transcription and through CASP8AP2, regulate FAS-mediated apoptosis. May also play a role in infection by viruses through mechanisms that may involve chromatin and/or transcriptional regulation (By similarity).</text>
</comment>
<comment type="subunit">
    <text evidence="2">Homodimer. Interacts with members of the HP1 family of nonhistone chromosomal protein, such as CBX5 and CBX3 via the PxVxL motif. Interacts with ETS1; the interaction is direct and modulates ETS1 transcriptional activity. Interacts with the MRN complex which is composed of two heterodimers RAD50/MRE11 associated with a single NBN; recruits the complex to PML-related bodies. Interacts with HIPK2; positively regulates TP53-dependent transcription. Interacts with CASP8AP2; may negatively regulate CASP8AP2 export from the nucleus to the cytoplasm (By similarity).</text>
</comment>
<comment type="subcellular location">
    <subcellularLocation>
        <location evidence="2">Nucleus</location>
    </subcellularLocation>
    <subcellularLocation>
        <location evidence="2">Nucleus</location>
        <location evidence="2">PML body</location>
    </subcellularLocation>
    <subcellularLocation>
        <location evidence="2">Nucleus</location>
        <location evidence="2">Nuclear body</location>
    </subcellularLocation>
    <subcellularLocation>
        <location evidence="2">Cytoplasm</location>
    </subcellularLocation>
    <text evidence="2">Accumulates in the cytoplasm upon FAS activation.</text>
</comment>
<comment type="alternative products">
    <event type="alternative splicing"/>
    <isoform>
        <id>O35892-1</id>
        <name>1</name>
        <sequence type="displayed"/>
    </isoform>
    <isoform>
        <id>O35892-2</id>
        <name>2</name>
        <sequence type="described" ref="VSP_005985"/>
    </isoform>
</comment>
<comment type="induction">
    <text>By interferon.</text>
</comment>
<comment type="domain">
    <text evidence="2">The HSR domain is important for the nuclear body targeting as well as for the dimerization.</text>
</comment>
<comment type="domain">
    <text evidence="2">Contains one Pro-Xaa-Val-Xaa-Leu (PxVxL) motif, which is required for interaction with chromoshadow domains. This motif requires additional residues -7, -6, +4 and +5 of the central Val which contact the chromoshadow domain.</text>
</comment>
<comment type="PTM">
    <text evidence="1">Sumoylated. Sumoylated with SUMO1. Sumoylation depends on a functional nuclear localization signal but is not necessary for nuclear import or nuclear body targeting. Sumoylation may stabilize the interaction with CBX5 (By similarity).</text>
</comment>
<comment type="miscellaneous">
    <text>Sp100 is a single-copy gene. A related gene, D1LUB1/Sp100-rs, occurs in multiple copies and forms a conspicuous cluster in the chromosome 1. Sp100 and D1LUB1/Sp100-rs are homologous from the promoter up to a position in intron 3, but they differ 3' of that position.</text>
</comment>
<gene>
    <name type="primary">Sp100</name>
</gene>
<accession>O35892</accession>
<accession>E9PY02</accession>
<accession>O35897</accession>
<accession>O88392</accession>
<accession>O88395</accession>